<reference key="1">
    <citation type="journal article" date="1996" name="Genome Res.">
        <title>The characterization and localization of the mouse thymopoietin/lamina-associated polypeptide 2 gene and its alternatively spliced products.</title>
        <authorList>
            <person name="Berger R."/>
            <person name="Theodor L."/>
            <person name="Shoham J."/>
            <person name="Gokkel E."/>
            <person name="Brok-Simoni F."/>
            <person name="Avraham K.B."/>
            <person name="Copeland N.G."/>
            <person name="Jenkins N.A."/>
            <person name="Rechavi G."/>
            <person name="Simon A.J."/>
        </authorList>
    </citation>
    <scope>NUCLEOTIDE SEQUENCE [MRNA] (ISOFORMS ALPHA; BETA; GAMMA; DELTA; EPSILON AND ZETA)</scope>
    <source>
        <strain>C57BL/6 X DBA/2</strain>
        <tissue>Thymus</tissue>
    </source>
</reference>
<reference key="2">
    <citation type="journal article" date="2005" name="Science">
        <title>The transcriptional landscape of the mammalian genome.</title>
        <authorList>
            <person name="Carninci P."/>
            <person name="Kasukawa T."/>
            <person name="Katayama S."/>
            <person name="Gough J."/>
            <person name="Frith M.C."/>
            <person name="Maeda N."/>
            <person name="Oyama R."/>
            <person name="Ravasi T."/>
            <person name="Lenhard B."/>
            <person name="Wells C."/>
            <person name="Kodzius R."/>
            <person name="Shimokawa K."/>
            <person name="Bajic V.B."/>
            <person name="Brenner S.E."/>
            <person name="Batalov S."/>
            <person name="Forrest A.R."/>
            <person name="Zavolan M."/>
            <person name="Davis M.J."/>
            <person name="Wilming L.G."/>
            <person name="Aidinis V."/>
            <person name="Allen J.E."/>
            <person name="Ambesi-Impiombato A."/>
            <person name="Apweiler R."/>
            <person name="Aturaliya R.N."/>
            <person name="Bailey T.L."/>
            <person name="Bansal M."/>
            <person name="Baxter L."/>
            <person name="Beisel K.W."/>
            <person name="Bersano T."/>
            <person name="Bono H."/>
            <person name="Chalk A.M."/>
            <person name="Chiu K.P."/>
            <person name="Choudhary V."/>
            <person name="Christoffels A."/>
            <person name="Clutterbuck D.R."/>
            <person name="Crowe M.L."/>
            <person name="Dalla E."/>
            <person name="Dalrymple B.P."/>
            <person name="de Bono B."/>
            <person name="Della Gatta G."/>
            <person name="di Bernardo D."/>
            <person name="Down T."/>
            <person name="Engstrom P."/>
            <person name="Fagiolini M."/>
            <person name="Faulkner G."/>
            <person name="Fletcher C.F."/>
            <person name="Fukushima T."/>
            <person name="Furuno M."/>
            <person name="Futaki S."/>
            <person name="Gariboldi M."/>
            <person name="Georgii-Hemming P."/>
            <person name="Gingeras T.R."/>
            <person name="Gojobori T."/>
            <person name="Green R.E."/>
            <person name="Gustincich S."/>
            <person name="Harbers M."/>
            <person name="Hayashi Y."/>
            <person name="Hensch T.K."/>
            <person name="Hirokawa N."/>
            <person name="Hill D."/>
            <person name="Huminiecki L."/>
            <person name="Iacono M."/>
            <person name="Ikeo K."/>
            <person name="Iwama A."/>
            <person name="Ishikawa T."/>
            <person name="Jakt M."/>
            <person name="Kanapin A."/>
            <person name="Katoh M."/>
            <person name="Kawasawa Y."/>
            <person name="Kelso J."/>
            <person name="Kitamura H."/>
            <person name="Kitano H."/>
            <person name="Kollias G."/>
            <person name="Krishnan S.P."/>
            <person name="Kruger A."/>
            <person name="Kummerfeld S.K."/>
            <person name="Kurochkin I.V."/>
            <person name="Lareau L.F."/>
            <person name="Lazarevic D."/>
            <person name="Lipovich L."/>
            <person name="Liu J."/>
            <person name="Liuni S."/>
            <person name="McWilliam S."/>
            <person name="Madan Babu M."/>
            <person name="Madera M."/>
            <person name="Marchionni L."/>
            <person name="Matsuda H."/>
            <person name="Matsuzawa S."/>
            <person name="Miki H."/>
            <person name="Mignone F."/>
            <person name="Miyake S."/>
            <person name="Morris K."/>
            <person name="Mottagui-Tabar S."/>
            <person name="Mulder N."/>
            <person name="Nakano N."/>
            <person name="Nakauchi H."/>
            <person name="Ng P."/>
            <person name="Nilsson R."/>
            <person name="Nishiguchi S."/>
            <person name="Nishikawa S."/>
            <person name="Nori F."/>
            <person name="Ohara O."/>
            <person name="Okazaki Y."/>
            <person name="Orlando V."/>
            <person name="Pang K.C."/>
            <person name="Pavan W.J."/>
            <person name="Pavesi G."/>
            <person name="Pesole G."/>
            <person name="Petrovsky N."/>
            <person name="Piazza S."/>
            <person name="Reed J."/>
            <person name="Reid J.F."/>
            <person name="Ring B.Z."/>
            <person name="Ringwald M."/>
            <person name="Rost B."/>
            <person name="Ruan Y."/>
            <person name="Salzberg S.L."/>
            <person name="Sandelin A."/>
            <person name="Schneider C."/>
            <person name="Schoenbach C."/>
            <person name="Sekiguchi K."/>
            <person name="Semple C.A."/>
            <person name="Seno S."/>
            <person name="Sessa L."/>
            <person name="Sheng Y."/>
            <person name="Shibata Y."/>
            <person name="Shimada H."/>
            <person name="Shimada K."/>
            <person name="Silva D."/>
            <person name="Sinclair B."/>
            <person name="Sperling S."/>
            <person name="Stupka E."/>
            <person name="Sugiura K."/>
            <person name="Sultana R."/>
            <person name="Takenaka Y."/>
            <person name="Taki K."/>
            <person name="Tammoja K."/>
            <person name="Tan S.L."/>
            <person name="Tang S."/>
            <person name="Taylor M.S."/>
            <person name="Tegner J."/>
            <person name="Teichmann S.A."/>
            <person name="Ueda H.R."/>
            <person name="van Nimwegen E."/>
            <person name="Verardo R."/>
            <person name="Wei C.L."/>
            <person name="Yagi K."/>
            <person name="Yamanishi H."/>
            <person name="Zabarovsky E."/>
            <person name="Zhu S."/>
            <person name="Zimmer A."/>
            <person name="Hide W."/>
            <person name="Bult C."/>
            <person name="Grimmond S.M."/>
            <person name="Teasdale R.D."/>
            <person name="Liu E.T."/>
            <person name="Brusic V."/>
            <person name="Quackenbush J."/>
            <person name="Wahlestedt C."/>
            <person name="Mattick J.S."/>
            <person name="Hume D.A."/>
            <person name="Kai C."/>
            <person name="Sasaki D."/>
            <person name="Tomaru Y."/>
            <person name="Fukuda S."/>
            <person name="Kanamori-Katayama M."/>
            <person name="Suzuki M."/>
            <person name="Aoki J."/>
            <person name="Arakawa T."/>
            <person name="Iida J."/>
            <person name="Imamura K."/>
            <person name="Itoh M."/>
            <person name="Kato T."/>
            <person name="Kawaji H."/>
            <person name="Kawagashira N."/>
            <person name="Kawashima T."/>
            <person name="Kojima M."/>
            <person name="Kondo S."/>
            <person name="Konno H."/>
            <person name="Nakano K."/>
            <person name="Ninomiya N."/>
            <person name="Nishio T."/>
            <person name="Okada M."/>
            <person name="Plessy C."/>
            <person name="Shibata K."/>
            <person name="Shiraki T."/>
            <person name="Suzuki S."/>
            <person name="Tagami M."/>
            <person name="Waki K."/>
            <person name="Watahiki A."/>
            <person name="Okamura-Oho Y."/>
            <person name="Suzuki H."/>
            <person name="Kawai J."/>
            <person name="Hayashizaki Y."/>
        </authorList>
    </citation>
    <scope>NUCLEOTIDE SEQUENCE [LARGE SCALE MRNA]</scope>
    <source>
        <strain>C57BL/6J</strain>
        <tissue>Bone marrow</tissue>
        <tissue>Lung</tissue>
    </source>
</reference>
<reference key="3">
    <citation type="submission" date="2005-07" db="EMBL/GenBank/DDBJ databases">
        <authorList>
            <person name="Mural R.J."/>
            <person name="Adams M.D."/>
            <person name="Myers E.W."/>
            <person name="Smith H.O."/>
            <person name="Venter J.C."/>
        </authorList>
    </citation>
    <scope>NUCLEOTIDE SEQUENCE [LARGE SCALE GENOMIC DNA]</scope>
</reference>
<reference key="4">
    <citation type="journal article" date="1999" name="Biochemistry">
        <title>Identification of phosphorylation sites in native lamina-associated polypeptide 2 beta.</title>
        <authorList>
            <person name="Dreger M."/>
            <person name="Otto H."/>
            <person name="Neubauer G."/>
            <person name="Mann M."/>
            <person name="Hucho F."/>
        </authorList>
    </citation>
    <scope>PROTEIN SEQUENCE OF 61-85 AND 173-194 (ISOFORM BETA)</scope>
    <scope>PHOSPHORYLATION AT THR-74; THR-159; SER-176 AND SER-179</scope>
    <scope>IDENTIFICATION BY MASS SPECTROMETRY</scope>
</reference>
<reference key="5">
    <citation type="journal article" date="1999" name="J. Cell Sci.">
        <title>LAP2 binding protein 1 (L2BP1/BAF) is a candidate mediator of LAP2-chromatin interaction.</title>
        <authorList>
            <person name="Furukawa K."/>
        </authorList>
    </citation>
    <scope>INTERACTION WITH BANF1</scope>
</reference>
<reference key="6">
    <citation type="journal article" date="2001" name="J. Cell Sci.">
        <title>Nuclear membrane protein LAP2beta mediates transcriptional repression alone and together with its binding partner GCL (germ-cell-less).</title>
        <authorList>
            <person name="Nili E."/>
            <person name="Cojocaru G.S."/>
            <person name="Kalma Y."/>
            <person name="Ginsberg D."/>
            <person name="Copeland N.G."/>
            <person name="Gilbert D.J."/>
            <person name="Jenkins N.A."/>
            <person name="Berger R."/>
            <person name="Shaklai S."/>
            <person name="Amariglio N."/>
            <person name="Brok-Simoni F."/>
            <person name="Simon A.J."/>
            <person name="Rechavi G."/>
        </authorList>
    </citation>
    <scope>INTERACTION WITH GMCL</scope>
</reference>
<reference key="7">
    <citation type="journal article" date="2006" name="Mol. Cell. Proteomics">
        <title>Comprehensive identification of phosphorylation sites in postsynaptic density preparations.</title>
        <authorList>
            <person name="Trinidad J.C."/>
            <person name="Specht C.G."/>
            <person name="Thalhammer A."/>
            <person name="Schoepfer R."/>
            <person name="Burlingame A.L."/>
        </authorList>
    </citation>
    <scope>IDENTIFICATION BY MASS SPECTROMETRY [LARGE SCALE ANALYSIS]</scope>
    <source>
        <tissue>Brain</tissue>
    </source>
</reference>
<reference key="8">
    <citation type="journal article" date="2007" name="Proc. Natl. Acad. Sci. U.S.A.">
        <title>Large-scale phosphorylation analysis of mouse liver.</title>
        <authorList>
            <person name="Villen J."/>
            <person name="Beausoleil S.A."/>
            <person name="Gerber S.A."/>
            <person name="Gygi S.P."/>
        </authorList>
    </citation>
    <scope>PHOSPHORYLATION [LARGE SCALE ANALYSIS] AT SER-66; SER-67; THR-74 AND THR-159</scope>
    <scope>IDENTIFICATION BY MASS SPECTROMETRY [LARGE SCALE ANALYSIS]</scope>
    <source>
        <tissue>Liver</tissue>
    </source>
</reference>
<reference key="9">
    <citation type="journal article" date="2009" name="Immunity">
        <title>The phagosomal proteome in interferon-gamma-activated macrophages.</title>
        <authorList>
            <person name="Trost M."/>
            <person name="English L."/>
            <person name="Lemieux S."/>
            <person name="Courcelles M."/>
            <person name="Desjardins M."/>
            <person name="Thibault P."/>
        </authorList>
    </citation>
    <scope>IDENTIFICATION BY MASS SPECTROMETRY [LARGE SCALE ANALYSIS]</scope>
</reference>
<reference key="10">
    <citation type="journal article" date="2009" name="Mol. Cell. Proteomics">
        <title>Large scale localization of protein phosphorylation by use of electron capture dissociation mass spectrometry.</title>
        <authorList>
            <person name="Sweet S.M."/>
            <person name="Bailey C.M."/>
            <person name="Cunningham D.L."/>
            <person name="Heath J.K."/>
            <person name="Cooper H.J."/>
        </authorList>
    </citation>
    <scope>PHOSPHORYLATION [LARGE SCALE ANALYSIS] AT SER-66; SER-67 AND THR-74</scope>
    <scope>IDENTIFICATION BY MASS SPECTROMETRY [LARGE SCALE ANALYSIS]</scope>
    <source>
        <tissue>Embryonic fibroblast</tissue>
    </source>
</reference>
<reference key="11">
    <citation type="journal article" date="2010" name="Cell">
        <title>A tissue-specific atlas of mouse protein phosphorylation and expression.</title>
        <authorList>
            <person name="Huttlin E.L."/>
            <person name="Jedrychowski M.P."/>
            <person name="Elias J.E."/>
            <person name="Goswami T."/>
            <person name="Rad R."/>
            <person name="Beausoleil S.A."/>
            <person name="Villen J."/>
            <person name="Haas W."/>
            <person name="Sowa M.E."/>
            <person name="Gygi S.P."/>
        </authorList>
    </citation>
    <scope>PHOSPHORYLATION [LARGE SCALE ANALYSIS] AT SER-66; SER-67; THR-74; SER-82; THR-153; SER-155; SER-158; THR-159; SER-165; SER-167; SER-305; SER-306 AND SER-361</scope>
    <scope>IDENTIFICATION BY MASS SPECTROMETRY [LARGE SCALE ANALYSIS]</scope>
    <source>
        <tissue>Brain</tissue>
        <tissue>Brown adipose tissue</tissue>
        <tissue>Heart</tissue>
        <tissue>Kidney</tissue>
        <tissue>Liver</tissue>
        <tissue>Lung</tissue>
        <tissue>Pancreas</tissue>
        <tissue>Spleen</tissue>
        <tissue>Testis</tissue>
    </source>
</reference>
<reference key="12">
    <citation type="journal article" date="2013" name="Mol. Cell">
        <title>SIRT5-mediated lysine desuccinylation impacts diverse metabolic pathways.</title>
        <authorList>
            <person name="Park J."/>
            <person name="Chen Y."/>
            <person name="Tishkoff D.X."/>
            <person name="Peng C."/>
            <person name="Tan M."/>
            <person name="Dai L."/>
            <person name="Xie Z."/>
            <person name="Zhang Y."/>
            <person name="Zwaans B.M."/>
            <person name="Skinner M.E."/>
            <person name="Lombard D.B."/>
            <person name="Zhao Y."/>
        </authorList>
    </citation>
    <scope>ACETYLATION [LARGE SCALE ANALYSIS] AT LYS-206 AND LYS-388</scope>
    <scope>IDENTIFICATION BY MASS SPECTROMETRY [LARGE SCALE ANALYSIS]</scope>
    <source>
        <tissue>Embryonic fibroblast</tissue>
    </source>
</reference>
<reference key="13">
    <citation type="journal article" date="2014" name="Mol. Cell. Proteomics">
        <title>Immunoaffinity enrichment and mass spectrometry analysis of protein methylation.</title>
        <authorList>
            <person name="Guo A."/>
            <person name="Gu H."/>
            <person name="Zhou J."/>
            <person name="Mulhern D."/>
            <person name="Wang Y."/>
            <person name="Lee K.A."/>
            <person name="Yang V."/>
            <person name="Aguiar M."/>
            <person name="Kornhauser J."/>
            <person name="Jia X."/>
            <person name="Ren J."/>
            <person name="Beausoleil S.A."/>
            <person name="Silva J.C."/>
            <person name="Vemulapalli V."/>
            <person name="Bedford M.T."/>
            <person name="Comb M.J."/>
        </authorList>
    </citation>
    <scope>METHYLATION [LARGE SCALE ANALYSIS] AT ARG-85 AND ARG-87</scope>
    <scope>IDENTIFICATION BY MASS SPECTROMETRY [LARGE SCALE ANALYSIS]</scope>
    <source>
        <tissue>Brain</tissue>
        <tissue>Embryo</tissue>
    </source>
</reference>
<reference key="14">
    <citation type="journal article" date="2014" name="Nature">
        <title>Citrullination regulates pluripotency and histone H1 binding to chromatin.</title>
        <authorList>
            <person name="Christophorou M.A."/>
            <person name="Castelo-Branco G."/>
            <person name="Halley-Stott R.P."/>
            <person name="Oliveira C.S."/>
            <person name="Loos R."/>
            <person name="Radzisheuskaya A."/>
            <person name="Mowen K.A."/>
            <person name="Bertone P."/>
            <person name="Silva J.C."/>
            <person name="Zernicka-Goetz M."/>
            <person name="Nielsen M.L."/>
            <person name="Gurdon J.B."/>
            <person name="Kouzarides T."/>
        </authorList>
    </citation>
    <scope>CITRULLINATION AT ARG-319</scope>
</reference>
<gene>
    <name type="primary">Tmpo</name>
    <name type="synonym">Lap2</name>
</gene>
<evidence type="ECO:0000250" key="1"/>
<evidence type="ECO:0000250" key="2">
    <source>
        <dbReference type="UniProtKB" id="P42167"/>
    </source>
</evidence>
<evidence type="ECO:0000255" key="3"/>
<evidence type="ECO:0000255" key="4">
    <source>
        <dbReference type="PROSITE-ProRule" id="PRU00313"/>
    </source>
</evidence>
<evidence type="ECO:0000255" key="5">
    <source>
        <dbReference type="PROSITE-ProRule" id="PRU00314"/>
    </source>
</evidence>
<evidence type="ECO:0000256" key="6">
    <source>
        <dbReference type="SAM" id="MobiDB-lite"/>
    </source>
</evidence>
<evidence type="ECO:0000269" key="7">
    <source>
    </source>
</evidence>
<evidence type="ECO:0000269" key="8">
    <source>
    </source>
</evidence>
<evidence type="ECO:0000303" key="9">
    <source>
    </source>
</evidence>
<evidence type="ECO:0000305" key="10"/>
<evidence type="ECO:0007744" key="11">
    <source>
    </source>
</evidence>
<evidence type="ECO:0007744" key="12">
    <source>
    </source>
</evidence>
<evidence type="ECO:0007744" key="13">
    <source>
    </source>
</evidence>
<evidence type="ECO:0007744" key="14">
    <source>
    </source>
</evidence>
<evidence type="ECO:0007744" key="15">
    <source>
    </source>
</evidence>
<comment type="function">
    <text evidence="1">May help direct the assembly of the nuclear lamina and thereby help maintain the structural organization of the nuclear envelope. Possible receptor for attachment of lamin filaments to the inner nuclear membrane. May be involved in the control of initiation of DNA replication through its interaction with NAKAP95 (By similarity).</text>
</comment>
<comment type="subunit">
    <text evidence="1">Interacts with LMNB1, LMNB2, BANF1, AKAP8L, GMCL and chromosomes.</text>
</comment>
<comment type="interaction">
    <interactant intactId="EBI-6172136">
        <id>Q61029</id>
    </interactant>
    <interactant intactId="EBI-642868">
        <id>Q64321</id>
        <label>Zbtb7b</label>
    </interactant>
    <organismsDiffer>false</organismsDiffer>
    <experiments>2</experiments>
</comment>
<comment type="subcellular location">
    <subcellularLocation>
        <location evidence="1">Nucleus inner membrane</location>
        <topology evidence="1">Single-pass type II membrane protein</topology>
    </subcellularLocation>
    <subcellularLocation>
        <location evidence="1">Chromosome</location>
    </subcellularLocation>
    <text evidence="1">Tightly associated with the nuclear lamina.</text>
</comment>
<comment type="alternative products">
    <event type="alternative splicing"/>
    <isoform>
        <id>Q61029-1</id>
        <name>Beta</name>
        <sequence type="displayed"/>
    </isoform>
    <isoform>
        <id>Q61033-1</id>
        <name>Alpha</name>
        <sequence type="external"/>
    </isoform>
    <isoform>
        <id>Q61033-2</id>
        <name>Zeta</name>
        <sequence type="external"/>
    </isoform>
    <isoform>
        <id>Q61029-2</id>
        <name>Delta</name>
        <sequence type="described" ref="VSP_010131"/>
    </isoform>
    <isoform>
        <id>Q61029-3</id>
        <name>Epsilon</name>
        <sequence type="described" ref="VSP_010130"/>
    </isoform>
    <isoform>
        <id>Q61029-4</id>
        <name>Gamma</name>
        <sequence type="described" ref="VSP_010132"/>
    </isoform>
</comment>
<comment type="domain">
    <text evidence="1">Has two structurally independent, non-interacting domains: LEM-like (also called LAP2-N or LEM-D) and LEM (also called LAP2-C or LEM-B). LEM-like binds DNA while LEM interacts with BANF1 (By similarity).</text>
</comment>
<comment type="PTM">
    <text evidence="1">Mitosis-specific phosphorylation specifically abolishes its binding to lamin B and chromosomes.</text>
</comment>
<comment type="PTM">
    <text evidence="8">Citrullinated by PADI4.</text>
</comment>
<comment type="similarity">
    <text evidence="10">Belongs to the LEM family.</text>
</comment>
<name>LAP2B_MOUSE</name>
<proteinExistence type="evidence at protein level"/>
<protein>
    <recommendedName>
        <fullName>Lamina-associated polypeptide 2, isoforms beta/delta/epsilon/gamma</fullName>
    </recommendedName>
    <alternativeName>
        <fullName>Thymopoietin isoforms beta/delta/epsilon/gamma</fullName>
        <shortName>TP beta/delta/epsilon/gamma</shortName>
    </alternativeName>
</protein>
<accession>Q61029</accession>
<accession>Q3UCI5</accession>
<accession>Q61030</accession>
<accession>Q61031</accession>
<accession>Q61032</accession>
<dbReference type="EMBL" id="U39074">
    <property type="protein sequence ID" value="AAC52574.1"/>
    <property type="molecule type" value="mRNA"/>
</dbReference>
<dbReference type="EMBL" id="U39075">
    <property type="protein sequence ID" value="AAC52575.1"/>
    <property type="molecule type" value="mRNA"/>
</dbReference>
<dbReference type="EMBL" id="U39076">
    <property type="protein sequence ID" value="AAC52576.1"/>
    <property type="molecule type" value="mRNA"/>
</dbReference>
<dbReference type="EMBL" id="U39077">
    <property type="protein sequence ID" value="AAC52577.1"/>
    <property type="molecule type" value="mRNA"/>
</dbReference>
<dbReference type="EMBL" id="AK150305">
    <property type="protein sequence ID" value="BAE29455.1"/>
    <property type="molecule type" value="mRNA"/>
</dbReference>
<dbReference type="EMBL" id="AK150515">
    <property type="protein sequence ID" value="BAE29627.1"/>
    <property type="molecule type" value="mRNA"/>
</dbReference>
<dbReference type="EMBL" id="AK153281">
    <property type="protein sequence ID" value="BAE31865.1"/>
    <property type="molecule type" value="mRNA"/>
</dbReference>
<dbReference type="EMBL" id="AK165851">
    <property type="protein sequence ID" value="BAE38413.1"/>
    <property type="molecule type" value="mRNA"/>
</dbReference>
<dbReference type="EMBL" id="CH466539">
    <property type="protein sequence ID" value="EDL21533.1"/>
    <property type="molecule type" value="Genomic_DNA"/>
</dbReference>
<dbReference type="CCDS" id="CCDS36032.1">
    <molecule id="Q61029-4"/>
</dbReference>
<dbReference type="CCDS" id="CCDS36033.1">
    <molecule id="Q61029-2"/>
</dbReference>
<dbReference type="CCDS" id="CCDS36034.1">
    <molecule id="Q61029-3"/>
</dbReference>
<dbReference type="CCDS" id="CCDS36035.1">
    <molecule id="Q61029-1"/>
</dbReference>
<dbReference type="RefSeq" id="NP_001073598.1">
    <molecule id="Q61029-1"/>
    <property type="nucleotide sequence ID" value="NM_001080129.3"/>
</dbReference>
<dbReference type="RefSeq" id="NP_001073599.1">
    <molecule id="Q61029-3"/>
    <property type="nucleotide sequence ID" value="NM_001080130.3"/>
</dbReference>
<dbReference type="RefSeq" id="NP_001073600.1">
    <molecule id="Q61029-2"/>
    <property type="nucleotide sequence ID" value="NM_001080131.3"/>
</dbReference>
<dbReference type="RefSeq" id="NP_001073601.1">
    <molecule id="Q61029-4"/>
    <property type="nucleotide sequence ID" value="NM_001080132.3"/>
</dbReference>
<dbReference type="BioGRID" id="204234">
    <property type="interactions" value="18"/>
</dbReference>
<dbReference type="IntAct" id="Q61029">
    <property type="interactions" value="4"/>
</dbReference>
<dbReference type="ChEMBL" id="CHEMBL4879470"/>
<dbReference type="iPTMnet" id="Q61029"/>
<dbReference type="PhosphoSitePlus" id="Q61029"/>
<dbReference type="SwissPalm" id="Q61029"/>
<dbReference type="jPOST" id="Q61029"/>
<dbReference type="PeptideAtlas" id="Q61029"/>
<dbReference type="ProteomicsDB" id="264967">
    <molecule id="Q61029-1"/>
</dbReference>
<dbReference type="ProteomicsDB" id="264968">
    <molecule id="Q61029-2"/>
</dbReference>
<dbReference type="ProteomicsDB" id="264969">
    <molecule id="Q61029-3"/>
</dbReference>
<dbReference type="ProteomicsDB" id="264970">
    <molecule id="Q61029-4"/>
</dbReference>
<dbReference type="Pumba" id="Q61029"/>
<dbReference type="TopDownProteomics" id="Q61029-1">
    <molecule id="Q61029-1"/>
</dbReference>
<dbReference type="Antibodypedia" id="2387">
    <property type="antibodies" value="401 antibodies from 37 providers"/>
</dbReference>
<dbReference type="DNASU" id="21917"/>
<dbReference type="Ensembl" id="ENSMUST00000072239.14">
    <molecule id="Q61029-1"/>
    <property type="protein sequence ID" value="ENSMUSP00000072092.8"/>
    <property type="gene ID" value="ENSMUSG00000019961.18"/>
</dbReference>
<dbReference type="Ensembl" id="ENSMUST00000092219.14">
    <molecule id="Q61029-3"/>
    <property type="protein sequence ID" value="ENSMUSP00000089864.7"/>
    <property type="gene ID" value="ENSMUSG00000019961.18"/>
</dbReference>
<dbReference type="Ensembl" id="ENSMUST00000099355.12">
    <molecule id="Q61029-2"/>
    <property type="protein sequence ID" value="ENSMUSP00000096956.5"/>
    <property type="gene ID" value="ENSMUSG00000019961.18"/>
</dbReference>
<dbReference type="Ensembl" id="ENSMUST00000105293.11">
    <molecule id="Q61029-4"/>
    <property type="protein sequence ID" value="ENSMUSP00000100930.4"/>
    <property type="gene ID" value="ENSMUSG00000019961.18"/>
</dbReference>
<dbReference type="GeneID" id="21917"/>
<dbReference type="KEGG" id="mmu:21917"/>
<dbReference type="UCSC" id="uc007gtq.2">
    <molecule id="Q61029-1"/>
    <property type="organism name" value="mouse"/>
</dbReference>
<dbReference type="UCSC" id="uc007gts.2">
    <molecule id="Q61029-2"/>
    <property type="organism name" value="mouse"/>
</dbReference>
<dbReference type="UCSC" id="uc007gtt.2">
    <molecule id="Q61029-4"/>
    <property type="organism name" value="mouse"/>
</dbReference>
<dbReference type="AGR" id="MGI:106920"/>
<dbReference type="CTD" id="7112"/>
<dbReference type="MGI" id="MGI:106920">
    <property type="gene designation" value="Tmpo"/>
</dbReference>
<dbReference type="VEuPathDB" id="HostDB:ENSMUSG00000019961"/>
<dbReference type="GeneTree" id="ENSGT00940000154098"/>
<dbReference type="HOGENOM" id="CLU_032534_1_0_1"/>
<dbReference type="OMA" id="YTESRSI"/>
<dbReference type="OrthoDB" id="10072362at2759"/>
<dbReference type="BioGRID-ORCS" id="21917">
    <property type="hits" value="3 hits in 78 CRISPR screens"/>
</dbReference>
<dbReference type="ChiTaRS" id="Tmpo">
    <property type="organism name" value="mouse"/>
</dbReference>
<dbReference type="Proteomes" id="UP000000589">
    <property type="component" value="Chromosome 10"/>
</dbReference>
<dbReference type="Bgee" id="ENSMUSG00000019961">
    <property type="expression patterns" value="Expressed in ectoderm and 279 other cell types or tissues"/>
</dbReference>
<dbReference type="ExpressionAtlas" id="Q61029">
    <property type="expression patterns" value="baseline and differential"/>
</dbReference>
<dbReference type="GO" id="GO:0000785">
    <property type="term" value="C:chromatin"/>
    <property type="evidence" value="ECO:0000266"/>
    <property type="project" value="MGI"/>
</dbReference>
<dbReference type="GO" id="GO:0005635">
    <property type="term" value="C:nuclear envelope"/>
    <property type="evidence" value="ECO:0000314"/>
    <property type="project" value="MGI"/>
</dbReference>
<dbReference type="GO" id="GO:0005637">
    <property type="term" value="C:nuclear inner membrane"/>
    <property type="evidence" value="ECO:0007669"/>
    <property type="project" value="UniProtKB-SubCell"/>
</dbReference>
<dbReference type="GO" id="GO:0005634">
    <property type="term" value="C:nucleus"/>
    <property type="evidence" value="ECO:0000266"/>
    <property type="project" value="MGI"/>
</dbReference>
<dbReference type="GO" id="GO:0003677">
    <property type="term" value="F:DNA binding"/>
    <property type="evidence" value="ECO:0007669"/>
    <property type="project" value="UniProtKB-KW"/>
</dbReference>
<dbReference type="GO" id="GO:0006355">
    <property type="term" value="P:regulation of DNA-templated transcription"/>
    <property type="evidence" value="ECO:0000314"/>
    <property type="project" value="MGI"/>
</dbReference>
<dbReference type="CDD" id="cd12940">
    <property type="entry name" value="LEM_LAP2_LEMD1"/>
    <property type="match status" value="1"/>
</dbReference>
<dbReference type="CDD" id="cd12935">
    <property type="entry name" value="LEM_like"/>
    <property type="match status" value="1"/>
</dbReference>
<dbReference type="FunFam" id="1.10.720.40:FF:000002">
    <property type="entry name" value="Thymopoietin isoform alpha"/>
    <property type="match status" value="1"/>
</dbReference>
<dbReference type="FunFam" id="1.10.720.40:FF:000003">
    <property type="entry name" value="thymopoietin isoform X1"/>
    <property type="match status" value="1"/>
</dbReference>
<dbReference type="Gene3D" id="1.10.720.40">
    <property type="match status" value="2"/>
</dbReference>
<dbReference type="InterPro" id="IPR013146">
    <property type="entry name" value="LEM-like_dom"/>
</dbReference>
<dbReference type="InterPro" id="IPR011015">
    <property type="entry name" value="LEM/LEM-like_dom_sf"/>
</dbReference>
<dbReference type="InterPro" id="IPR003887">
    <property type="entry name" value="LEM_dom"/>
</dbReference>
<dbReference type="InterPro" id="IPR051656">
    <property type="entry name" value="LEM_domain"/>
</dbReference>
<dbReference type="PANTHER" id="PTHR12019:SF23">
    <property type="entry name" value="LAMINA-ASSOCIATED POLYPEPTIDE 2, ISOFORM BETA"/>
    <property type="match status" value="1"/>
</dbReference>
<dbReference type="PANTHER" id="PTHR12019">
    <property type="entry name" value="LAMINA-ASSOCIATED POLYPEPTIDE THYMOPOIETIN"/>
    <property type="match status" value="1"/>
</dbReference>
<dbReference type="Pfam" id="PF03020">
    <property type="entry name" value="LEM"/>
    <property type="match status" value="1"/>
</dbReference>
<dbReference type="Pfam" id="PF08198">
    <property type="entry name" value="Thymopoietin"/>
    <property type="match status" value="1"/>
</dbReference>
<dbReference type="SMART" id="SM00540">
    <property type="entry name" value="LEM"/>
    <property type="match status" value="1"/>
</dbReference>
<dbReference type="SMART" id="SM01261">
    <property type="entry name" value="Thymopoietin"/>
    <property type="match status" value="1"/>
</dbReference>
<dbReference type="SUPFAM" id="SSF63451">
    <property type="entry name" value="LEM domain"/>
    <property type="match status" value="2"/>
</dbReference>
<dbReference type="PROSITE" id="PS50954">
    <property type="entry name" value="LEM"/>
    <property type="match status" value="1"/>
</dbReference>
<dbReference type="PROSITE" id="PS50955">
    <property type="entry name" value="LEM_LIKE"/>
    <property type="match status" value="1"/>
</dbReference>
<organism>
    <name type="scientific">Mus musculus</name>
    <name type="common">Mouse</name>
    <dbReference type="NCBI Taxonomy" id="10090"/>
    <lineage>
        <taxon>Eukaryota</taxon>
        <taxon>Metazoa</taxon>
        <taxon>Chordata</taxon>
        <taxon>Craniata</taxon>
        <taxon>Vertebrata</taxon>
        <taxon>Euteleostomi</taxon>
        <taxon>Mammalia</taxon>
        <taxon>Eutheria</taxon>
        <taxon>Euarchontoglires</taxon>
        <taxon>Glires</taxon>
        <taxon>Rodentia</taxon>
        <taxon>Myomorpha</taxon>
        <taxon>Muroidea</taxon>
        <taxon>Muridae</taxon>
        <taxon>Murinae</taxon>
        <taxon>Mus</taxon>
        <taxon>Mus</taxon>
    </lineage>
</organism>
<keyword id="KW-0007">Acetylation</keyword>
<keyword id="KW-0025">Alternative splicing</keyword>
<keyword id="KW-0158">Chromosome</keyword>
<keyword id="KW-0164">Citrullination</keyword>
<keyword id="KW-0903">Direct protein sequencing</keyword>
<keyword id="KW-0238">DNA-binding</keyword>
<keyword id="KW-1017">Isopeptide bond</keyword>
<keyword id="KW-0472">Membrane</keyword>
<keyword id="KW-0488">Methylation</keyword>
<keyword id="KW-0539">Nucleus</keyword>
<keyword id="KW-0597">Phosphoprotein</keyword>
<keyword id="KW-1185">Reference proteome</keyword>
<keyword id="KW-0735">Signal-anchor</keyword>
<keyword id="KW-0812">Transmembrane</keyword>
<keyword id="KW-1133">Transmembrane helix</keyword>
<keyword id="KW-0832">Ubl conjugation</keyword>
<sequence>MPEFLEDPSVLTKDKLKSELVANNVTLPAGEQRKDVYVQLYLQHLTARNRPPLAAGANSKGPPDFSSDEEREPTPVLGSGASVGRGRGAVGRKATKKTDKPRLEDKDDLDVTELSNEELLDQLVRYGVNPGPIVGTTRKLYEKKLLKLREQGTESRSSTPLPTVSSSAENTRQNGSNDSDRYSDNDEDSKIELKLEKREPLKGRAKTPVTLKQRRTEHNQSYSQAGVTETEWTSGSSTGGPLQALTRESTRGSRRTPRKRVETSQHFRIDGAVISESTPIAETIKASSNESLVANRLTGNFKHASSILPITEFSDITRRTPKKPLTRAEVGEKTEERRVDRDILKEMFPYEASTPTGISASCRRPIKGAAGRPLELSDFRMEESFSSKYVPKYAPLADVKSEKTKKRRSVPMWIKMLLFALVAVFLFLVYQAMETNQGNPFTNFLQDTKISN</sequence>
<feature type="chain" id="PRO_0000206146" description="Lamina-associated polypeptide 2, isoforms beta/delta/epsilon/gamma">
    <location>
        <begin position="1"/>
        <end position="452"/>
    </location>
</feature>
<feature type="transmembrane region" description="Helical; Signal-anchor for type II membrane protein" evidence="3">
    <location>
        <begin position="410"/>
        <end position="430"/>
    </location>
</feature>
<feature type="topological domain" description="Lumenal" evidence="3">
    <location>
        <begin position="431"/>
        <end position="452"/>
    </location>
</feature>
<feature type="domain" description="LEM-like" evidence="4 5">
    <location>
        <begin position="5"/>
        <end position="48"/>
    </location>
</feature>
<feature type="domain" description="LEM" evidence="4">
    <location>
        <begin position="109"/>
        <end position="153"/>
    </location>
</feature>
<feature type="region of interest" description="Nucleoplasmic" evidence="3">
    <location>
        <begin position="1"/>
        <end position="409"/>
    </location>
</feature>
<feature type="region of interest" description="Disordered" evidence="6">
    <location>
        <begin position="48"/>
        <end position="111"/>
    </location>
</feature>
<feature type="region of interest" description="Linker">
    <location>
        <begin position="49"/>
        <end position="108"/>
    </location>
</feature>
<feature type="region of interest" description="NAKAP95-binding N">
    <location>
        <begin position="137"/>
        <end position="242"/>
    </location>
</feature>
<feature type="region of interest" description="Disordered" evidence="6">
    <location>
        <begin position="149"/>
        <end position="263"/>
    </location>
</feature>
<feature type="region of interest" description="Binds lamins B">
    <location>
        <begin position="298"/>
        <end position="370"/>
    </location>
</feature>
<feature type="region of interest" description="NAKAP95-binding C">
    <location>
        <begin position="299"/>
        <end position="373"/>
    </location>
</feature>
<feature type="compositionally biased region" description="Basic and acidic residues" evidence="6">
    <location>
        <begin position="96"/>
        <end position="105"/>
    </location>
</feature>
<feature type="compositionally biased region" description="Polar residues" evidence="6">
    <location>
        <begin position="154"/>
        <end position="177"/>
    </location>
</feature>
<feature type="compositionally biased region" description="Basic and acidic residues" evidence="6">
    <location>
        <begin position="178"/>
        <end position="202"/>
    </location>
</feature>
<feature type="compositionally biased region" description="Low complexity" evidence="6">
    <location>
        <begin position="226"/>
        <end position="240"/>
    </location>
</feature>
<feature type="modified residue" description="Phosphoserine" evidence="2">
    <location>
        <position position="59"/>
    </location>
</feature>
<feature type="modified residue" description="Phosphoserine" evidence="11 12 13">
    <location>
        <position position="66"/>
    </location>
</feature>
<feature type="modified residue" description="Phosphoserine" evidence="11 12 13">
    <location>
        <position position="67"/>
    </location>
</feature>
<feature type="modified residue" description="Phosphothreonine" evidence="7 11 12 13">
    <location>
        <position position="74"/>
    </location>
</feature>
<feature type="modified residue" description="Phosphoserine" evidence="2">
    <location>
        <position position="79"/>
    </location>
</feature>
<feature type="modified residue" description="Phosphoserine" evidence="13">
    <location>
        <position position="82"/>
    </location>
</feature>
<feature type="modified residue" description="Omega-N-methylarginine" evidence="15">
    <location>
        <position position="85"/>
    </location>
</feature>
<feature type="modified residue" description="Omega-N-methylarginine" evidence="15">
    <location>
        <position position="87"/>
    </location>
</feature>
<feature type="modified residue" description="Phosphothreonine" evidence="13">
    <location>
        <position position="153"/>
    </location>
</feature>
<feature type="modified residue" description="Phosphoserine" evidence="13">
    <location>
        <position position="155"/>
    </location>
</feature>
<feature type="modified residue" description="Phosphoserine" evidence="13">
    <location>
        <position position="158"/>
    </location>
</feature>
<feature type="modified residue" description="Phosphothreonine" evidence="7 11 13">
    <location>
        <position position="159"/>
    </location>
</feature>
<feature type="modified residue" description="Phosphothreonine" evidence="2">
    <location>
        <position position="163"/>
    </location>
</feature>
<feature type="modified residue" description="Phosphoserine" evidence="13">
    <location>
        <position position="165"/>
    </location>
</feature>
<feature type="modified residue" description="Phosphoserine" evidence="13">
    <location>
        <position position="167"/>
    </location>
</feature>
<feature type="modified residue" description="Phosphoserine" evidence="7">
    <location>
        <position position="176"/>
    </location>
</feature>
<feature type="modified residue" description="Phosphoserine; by PKC" evidence="7">
    <location>
        <position position="179"/>
    </location>
</feature>
<feature type="modified residue" description="Phosphoserine" evidence="2">
    <location>
        <position position="183"/>
    </location>
</feature>
<feature type="modified residue" description="Phosphoserine" evidence="2">
    <location>
        <position position="189"/>
    </location>
</feature>
<feature type="modified residue" description="N6-acetyllysine" evidence="14">
    <location>
        <position position="206"/>
    </location>
</feature>
<feature type="modified residue" description="Phosphothreonine" evidence="2">
    <location>
        <position position="210"/>
    </location>
</feature>
<feature type="modified residue" description="Phosphoserine" evidence="2">
    <location>
        <position position="221"/>
    </location>
</feature>
<feature type="modified residue" description="Phosphoserine" evidence="2">
    <location>
        <position position="223"/>
    </location>
</feature>
<feature type="modified residue" description="Phosphoserine" evidence="2">
    <location>
        <position position="249"/>
    </location>
</feature>
<feature type="modified residue" description="Phosphoserine" evidence="2">
    <location>
        <position position="253"/>
    </location>
</feature>
<feature type="modified residue" description="Phosphoserine" evidence="2">
    <location>
        <position position="264"/>
    </location>
</feature>
<feature type="modified residue" description="Phosphoserine" evidence="2">
    <location>
        <position position="291"/>
    </location>
</feature>
<feature type="modified residue" description="Phosphoserine" evidence="13">
    <location>
        <position position="305"/>
    </location>
</feature>
<feature type="modified residue" description="Phosphoserine" evidence="13">
    <location>
        <position position="306"/>
    </location>
</feature>
<feature type="modified residue" description="Phosphothreonine" evidence="2">
    <location>
        <position position="311"/>
    </location>
</feature>
<feature type="modified residue" description="Phosphoserine" evidence="2">
    <location>
        <position position="314"/>
    </location>
</feature>
<feature type="modified residue" description="Citrulline" evidence="8">
    <location>
        <position position="319"/>
    </location>
</feature>
<feature type="modified residue" description="Phosphoserine" evidence="13">
    <location>
        <position position="361"/>
    </location>
</feature>
<feature type="modified residue" description="Phosphoserine" evidence="2">
    <location>
        <position position="377"/>
    </location>
</feature>
<feature type="modified residue" description="Phosphoserine" evidence="2">
    <location>
        <position position="384"/>
    </location>
</feature>
<feature type="modified residue" description="N6-acetyllysine" evidence="14">
    <location>
        <position position="388"/>
    </location>
</feature>
<feature type="modified residue" description="Phosphoserine" evidence="2">
    <location>
        <position position="401"/>
    </location>
</feature>
<feature type="cross-link" description="Glycyl lysine isopeptide (Lys-Gly) (interchain with G-Cter in SUMO2)" evidence="2">
    <location>
        <position position="400"/>
    </location>
</feature>
<feature type="splice variant" id="VSP_010132" description="In isoform Gamma." evidence="9">
    <location>
        <begin position="221"/>
        <end position="329"/>
    </location>
</feature>
<feature type="splice variant" id="VSP_010131" description="In isoform Delta." evidence="9">
    <location>
        <begin position="221"/>
        <end position="292"/>
    </location>
</feature>
<feature type="splice variant" id="VSP_010130" description="In isoform Epsilon." evidence="9">
    <location>
        <begin position="221"/>
        <end position="260"/>
    </location>
</feature>
<feature type="sequence conflict" description="In Ref. 1; AAC52574/AAC52575/AAC52576/AAC52577." evidence="10" ref="1">
    <original>EP</original>
    <variation>DA</variation>
    <location>
        <begin position="72"/>
        <end position="73"/>
    </location>
</feature>
<feature type="sequence conflict" description="In Ref. 1; AAC52574/AAC52575/AAC52576/AAC52577." evidence="10" ref="1">
    <original>VAV</original>
    <variation>GAC</variation>
    <location>
        <begin position="422"/>
        <end position="424"/>
    </location>
</feature>